<dbReference type="EMBL" id="AE005674">
    <property type="protein sequence ID" value="AAN42196.1"/>
    <property type="molecule type" value="Genomic_DNA"/>
</dbReference>
<dbReference type="EMBL" id="AE014073">
    <property type="protein sequence ID" value="AAP16069.1"/>
    <property type="molecule type" value="Genomic_DNA"/>
</dbReference>
<dbReference type="RefSeq" id="WP_000951294.1">
    <property type="nucleotide sequence ID" value="NZ_WPGW01000046.1"/>
</dbReference>
<dbReference type="SMR" id="Q83SA2"/>
<dbReference type="STRING" id="198214.SF0552"/>
<dbReference type="PaxDb" id="198214-SF0552"/>
<dbReference type="KEGG" id="sfl:SF0552"/>
<dbReference type="KEGG" id="sfx:S0560"/>
<dbReference type="PATRIC" id="fig|198214.7.peg.641"/>
<dbReference type="HOGENOM" id="CLU_013430_0_0_6"/>
<dbReference type="Proteomes" id="UP000001006">
    <property type="component" value="Chromosome"/>
</dbReference>
<dbReference type="Proteomes" id="UP000002673">
    <property type="component" value="Chromosome"/>
</dbReference>
<dbReference type="GO" id="GO:0005886">
    <property type="term" value="C:plasma membrane"/>
    <property type="evidence" value="ECO:0007669"/>
    <property type="project" value="UniProtKB-SubCell"/>
</dbReference>
<dbReference type="GO" id="GO:0005385">
    <property type="term" value="F:zinc ion transmembrane transporter activity"/>
    <property type="evidence" value="ECO:0007669"/>
    <property type="project" value="InterPro"/>
</dbReference>
<dbReference type="FunFam" id="1.20.1510.10:FF:000016">
    <property type="entry name" value="Zinc transporter ZitB"/>
    <property type="match status" value="1"/>
</dbReference>
<dbReference type="Gene3D" id="1.20.1510.10">
    <property type="entry name" value="Cation efflux protein transmembrane domain"/>
    <property type="match status" value="1"/>
</dbReference>
<dbReference type="HAMAP" id="MF_00552">
    <property type="entry name" value="ZitB"/>
    <property type="match status" value="1"/>
</dbReference>
<dbReference type="InterPro" id="IPR002524">
    <property type="entry name" value="Cation_efflux"/>
</dbReference>
<dbReference type="InterPro" id="IPR036837">
    <property type="entry name" value="Cation_efflux_CTD_sf"/>
</dbReference>
<dbReference type="InterPro" id="IPR027469">
    <property type="entry name" value="Cation_efflux_TMD_sf"/>
</dbReference>
<dbReference type="InterPro" id="IPR050681">
    <property type="entry name" value="CDF/SLC30A"/>
</dbReference>
<dbReference type="InterPro" id="IPR023500">
    <property type="entry name" value="Zn_transptr_ZitB"/>
</dbReference>
<dbReference type="NCBIfam" id="TIGR01297">
    <property type="entry name" value="CDF"/>
    <property type="match status" value="1"/>
</dbReference>
<dbReference type="NCBIfam" id="NF002923">
    <property type="entry name" value="PRK03557.1"/>
    <property type="match status" value="1"/>
</dbReference>
<dbReference type="PANTHER" id="PTHR11562">
    <property type="entry name" value="CATION EFFLUX PROTEIN/ ZINC TRANSPORTER"/>
    <property type="match status" value="1"/>
</dbReference>
<dbReference type="PANTHER" id="PTHR11562:SF17">
    <property type="entry name" value="RE54080P-RELATED"/>
    <property type="match status" value="1"/>
</dbReference>
<dbReference type="Pfam" id="PF01545">
    <property type="entry name" value="Cation_efflux"/>
    <property type="match status" value="1"/>
</dbReference>
<dbReference type="SUPFAM" id="SSF160240">
    <property type="entry name" value="Cation efflux protein cytoplasmic domain-like"/>
    <property type="match status" value="1"/>
</dbReference>
<dbReference type="SUPFAM" id="SSF161111">
    <property type="entry name" value="Cation efflux protein transmembrane domain-like"/>
    <property type="match status" value="1"/>
</dbReference>
<proteinExistence type="inferred from homology"/>
<name>ZITB_SHIFL</name>
<keyword id="KW-0997">Cell inner membrane</keyword>
<keyword id="KW-1003">Cell membrane</keyword>
<keyword id="KW-0406">Ion transport</keyword>
<keyword id="KW-0472">Membrane</keyword>
<keyword id="KW-1185">Reference proteome</keyword>
<keyword id="KW-0812">Transmembrane</keyword>
<keyword id="KW-1133">Transmembrane helix</keyword>
<keyword id="KW-0813">Transport</keyword>
<keyword id="KW-0862">Zinc</keyword>
<keyword id="KW-0864">Zinc transport</keyword>
<gene>
    <name type="primary">zitB</name>
    <name type="ordered locus">SF0552</name>
    <name type="ordered locus">S0560</name>
</gene>
<sequence length="313" mass="34808">MAHSHSHTSSHLPEDNNARRLLYAFGVTAGFMLVEVVGGFLSGSLALLADAGHMLTDTAALLFALLAVQFSRRPPTIRHTFGWLRLTTLAAFVNAIALVVITILIVWEAIERFRTPRPVEGGMMMAIAVAGLLANILSFWLLHHGSEEKNLNVRAAALHVLGDLLGSVGAIIAALIIIWTGWTPADPILSILVSLLVLRSAWRLLKDSVNELLEGAPVSLDIAELKRRMCREIPEVRNVHHVHVWMVGEKPVMTLHVQVIPPHDHDALLDQIQHYLMDHYQIEHTTIQMEYQPCHRPDCHLNEGVSGHSHHHH</sequence>
<protein>
    <recommendedName>
        <fullName>Zinc transporter ZitB</fullName>
    </recommendedName>
</protein>
<reference key="1">
    <citation type="journal article" date="2002" name="Nucleic Acids Res.">
        <title>Genome sequence of Shigella flexneri 2a: insights into pathogenicity through comparison with genomes of Escherichia coli K12 and O157.</title>
        <authorList>
            <person name="Jin Q."/>
            <person name="Yuan Z."/>
            <person name="Xu J."/>
            <person name="Wang Y."/>
            <person name="Shen Y."/>
            <person name="Lu W."/>
            <person name="Wang J."/>
            <person name="Liu H."/>
            <person name="Yang J."/>
            <person name="Yang F."/>
            <person name="Zhang X."/>
            <person name="Zhang J."/>
            <person name="Yang G."/>
            <person name="Wu H."/>
            <person name="Qu D."/>
            <person name="Dong J."/>
            <person name="Sun L."/>
            <person name="Xue Y."/>
            <person name="Zhao A."/>
            <person name="Gao Y."/>
            <person name="Zhu J."/>
            <person name="Kan B."/>
            <person name="Ding K."/>
            <person name="Chen S."/>
            <person name="Cheng H."/>
            <person name="Yao Z."/>
            <person name="He B."/>
            <person name="Chen R."/>
            <person name="Ma D."/>
            <person name="Qiang B."/>
            <person name="Wen Y."/>
            <person name="Hou Y."/>
            <person name="Yu J."/>
        </authorList>
    </citation>
    <scope>NUCLEOTIDE SEQUENCE [LARGE SCALE GENOMIC DNA]</scope>
    <source>
        <strain>301 / Serotype 2a</strain>
    </source>
</reference>
<reference key="2">
    <citation type="journal article" date="2003" name="Infect. Immun.">
        <title>Complete genome sequence and comparative genomics of Shigella flexneri serotype 2a strain 2457T.</title>
        <authorList>
            <person name="Wei J."/>
            <person name="Goldberg M.B."/>
            <person name="Burland V."/>
            <person name="Venkatesan M.M."/>
            <person name="Deng W."/>
            <person name="Fournier G."/>
            <person name="Mayhew G.F."/>
            <person name="Plunkett G. III"/>
            <person name="Rose D.J."/>
            <person name="Darling A."/>
            <person name="Mau B."/>
            <person name="Perna N.T."/>
            <person name="Payne S.M."/>
            <person name="Runyen-Janecky L.J."/>
            <person name="Zhou S."/>
            <person name="Schwartz D.C."/>
            <person name="Blattner F.R."/>
        </authorList>
    </citation>
    <scope>NUCLEOTIDE SEQUENCE [LARGE SCALE GENOMIC DNA]</scope>
    <source>
        <strain>ATCC 700930 / 2457T / Serotype 2a</strain>
    </source>
</reference>
<accession>Q83SA2</accession>
<evidence type="ECO:0000250" key="1"/>
<evidence type="ECO:0000255" key="2"/>
<evidence type="ECO:0000305" key="3"/>
<feature type="chain" id="PRO_0000206112" description="Zinc transporter ZitB">
    <location>
        <begin position="1"/>
        <end position="313"/>
    </location>
</feature>
<feature type="topological domain" description="Cytoplasmic" evidence="2">
    <location>
        <begin position="1"/>
        <end position="20"/>
    </location>
</feature>
<feature type="transmembrane region" description="Helical" evidence="2">
    <location>
        <begin position="21"/>
        <end position="41"/>
    </location>
</feature>
<feature type="topological domain" description="Periplasmic" evidence="2">
    <location>
        <begin position="42"/>
        <end position="47"/>
    </location>
</feature>
<feature type="transmembrane region" description="Helical" evidence="2">
    <location>
        <begin position="48"/>
        <end position="68"/>
    </location>
</feature>
<feature type="topological domain" description="Cytoplasmic" evidence="2">
    <location>
        <begin position="69"/>
        <end position="89"/>
    </location>
</feature>
<feature type="transmembrane region" description="Helical" evidence="2">
    <location>
        <begin position="90"/>
        <end position="110"/>
    </location>
</feature>
<feature type="topological domain" description="Periplasmic" evidence="2">
    <location>
        <begin position="111"/>
        <end position="121"/>
    </location>
</feature>
<feature type="transmembrane region" description="Helical" evidence="2">
    <location>
        <begin position="122"/>
        <end position="142"/>
    </location>
</feature>
<feature type="topological domain" description="Cytoplasmic" evidence="2">
    <location>
        <begin position="143"/>
        <end position="159"/>
    </location>
</feature>
<feature type="transmembrane region" description="Helical" evidence="2">
    <location>
        <begin position="160"/>
        <end position="180"/>
    </location>
</feature>
<feature type="topological domain" description="Periplasmic" evidence="2">
    <location>
        <position position="181"/>
    </location>
</feature>
<feature type="transmembrane region" description="Helical" evidence="2">
    <location>
        <begin position="182"/>
        <end position="202"/>
    </location>
</feature>
<feature type="topological domain" description="Cytoplasmic" evidence="2">
    <location>
        <begin position="203"/>
        <end position="313"/>
    </location>
</feature>
<comment type="function">
    <text evidence="1">Involved in zinc efflux across the cytoplasmic membrane, thus reducing zinc accumulation in the cytoplasm and rendering bacteria more resistant to zinc. It may contribute to zinc homeostasis at low concentrations of zinc (By similarity).</text>
</comment>
<comment type="subcellular location">
    <subcellularLocation>
        <location evidence="1">Cell inner membrane</location>
        <topology evidence="1">Multi-pass membrane protein</topology>
    </subcellularLocation>
</comment>
<comment type="similarity">
    <text evidence="3">Belongs to the cation diffusion facilitator (CDF) transporter (TC 2.A.4) family. SLC30A subfamily.</text>
</comment>
<organism>
    <name type="scientific">Shigella flexneri</name>
    <dbReference type="NCBI Taxonomy" id="623"/>
    <lineage>
        <taxon>Bacteria</taxon>
        <taxon>Pseudomonadati</taxon>
        <taxon>Pseudomonadota</taxon>
        <taxon>Gammaproteobacteria</taxon>
        <taxon>Enterobacterales</taxon>
        <taxon>Enterobacteriaceae</taxon>
        <taxon>Shigella</taxon>
    </lineage>
</organism>